<name>TRE1_SERP5</name>
<accession>A8GG78</accession>
<feature type="chain" id="PRO_0000446515" description="NAD(+)--protein-arginine ADP-ribosyltransferase Tre1">
    <location>
        <begin position="1"/>
        <end position="444"/>
    </location>
</feature>
<feature type="domain" description="TR mART core" evidence="1">
    <location>
        <begin position="266"/>
        <end position="444"/>
    </location>
</feature>
<feature type="region of interest" description="PAAR domain" evidence="5">
    <location>
        <begin position="72"/>
        <end position="140"/>
    </location>
</feature>
<feature type="region of interest" description="ART domain" evidence="5">
    <location>
        <begin position="274"/>
        <end position="444"/>
    </location>
</feature>
<feature type="active site" evidence="1 5">
    <location>
        <position position="356"/>
    </location>
</feature>
<feature type="active site" evidence="1 5">
    <location>
        <position position="381"/>
    </location>
</feature>
<feature type="active site" evidence="1 5">
    <location>
        <position position="415"/>
    </location>
</feature>
<feature type="mutagenesis site" description="Cells are impaired in interbacterial competetion, no ADP-ribosylation of proteins in target cells, the ART domain is no longer toxic when expressed in E.coli." evidence="2">
    <original>E</original>
    <variation>Q</variation>
    <location>
        <position position="415"/>
    </location>
</feature>
<feature type="helix" evidence="8">
    <location>
        <begin position="276"/>
        <end position="296"/>
    </location>
</feature>
<feature type="helix" evidence="8">
    <location>
        <begin position="301"/>
        <end position="310"/>
    </location>
</feature>
<feature type="helix" evidence="8">
    <location>
        <begin position="313"/>
        <end position="323"/>
    </location>
</feature>
<feature type="helix" evidence="8">
    <location>
        <begin position="331"/>
        <end position="346"/>
    </location>
</feature>
<feature type="strand" evidence="8">
    <location>
        <begin position="352"/>
        <end position="358"/>
    </location>
</feature>
<feature type="helix" evidence="8">
    <location>
        <begin position="362"/>
        <end position="366"/>
    </location>
</feature>
<feature type="strand" evidence="8">
    <location>
        <begin position="373"/>
        <end position="375"/>
    </location>
</feature>
<feature type="strand" evidence="8">
    <location>
        <begin position="380"/>
        <end position="385"/>
    </location>
</feature>
<feature type="strand" evidence="8">
    <location>
        <begin position="389"/>
        <end position="400"/>
    </location>
</feature>
<feature type="helix" evidence="8">
    <location>
        <begin position="405"/>
        <end position="407"/>
    </location>
</feature>
<feature type="strand" evidence="8">
    <location>
        <begin position="408"/>
        <end position="410"/>
    </location>
</feature>
<feature type="strand" evidence="8">
    <location>
        <begin position="415"/>
        <end position="418"/>
    </location>
</feature>
<feature type="strand" evidence="8">
    <location>
        <begin position="423"/>
        <end position="432"/>
    </location>
</feature>
<feature type="strand" evidence="8">
    <location>
        <begin position="435"/>
        <end position="442"/>
    </location>
</feature>
<evidence type="ECO:0000255" key="1">
    <source>
        <dbReference type="PROSITE-ProRule" id="PRU01340"/>
    </source>
</evidence>
<evidence type="ECO:0000269" key="2">
    <source>
    </source>
</evidence>
<evidence type="ECO:0000303" key="3">
    <source>
    </source>
</evidence>
<evidence type="ECO:0000305" key="4"/>
<evidence type="ECO:0000305" key="5">
    <source>
    </source>
</evidence>
<evidence type="ECO:0007744" key="6">
    <source>
        <dbReference type="PDB" id="6DRE"/>
    </source>
</evidence>
<evidence type="ECO:0007744" key="7">
    <source>
        <dbReference type="PDB" id="6DRH"/>
    </source>
</evidence>
<evidence type="ECO:0007829" key="8">
    <source>
        <dbReference type="PDB" id="6DRE"/>
    </source>
</evidence>
<proteinExistence type="evidence at protein level"/>
<reference key="1">
    <citation type="submission" date="2007-09" db="EMBL/GenBank/DDBJ databases">
        <title>Complete sequence of chromosome of Serratia proteamaculans 568.</title>
        <authorList>
            <consortium name="US DOE Joint Genome Institute"/>
            <person name="Copeland A."/>
            <person name="Lucas S."/>
            <person name="Lapidus A."/>
            <person name="Barry K."/>
            <person name="Glavina del Rio T."/>
            <person name="Dalin E."/>
            <person name="Tice H."/>
            <person name="Pitluck S."/>
            <person name="Chain P."/>
            <person name="Malfatti S."/>
            <person name="Shin M."/>
            <person name="Vergez L."/>
            <person name="Schmutz J."/>
            <person name="Larimer F."/>
            <person name="Land M."/>
            <person name="Hauser L."/>
            <person name="Kyrpides N."/>
            <person name="Kim E."/>
            <person name="Taghavi S."/>
            <person name="Newman L."/>
            <person name="Vangronsveld J."/>
            <person name="van der Lelie D."/>
            <person name="Richardson P."/>
        </authorList>
    </citation>
    <scope>NUCLEOTIDE SEQUENCE [LARGE SCALE GENOMIC DNA]</scope>
    <source>
        <strain>568</strain>
    </source>
</reference>
<reference evidence="6 7" key="2">
    <citation type="journal article" date="2018" name="Cell">
        <title>Bifunctional immunity proteins protect bacteria against FtsZ-targeting ADP-ribosylating toxins.</title>
        <authorList>
            <person name="Ting S.Y."/>
            <person name="Bosch D.E."/>
            <person name="Mangiameli S.M."/>
            <person name="Radey M.C."/>
            <person name="Huang S."/>
            <person name="Park Y.J."/>
            <person name="Kelly K.A."/>
            <person name="Filip S.K."/>
            <person name="Goo Y.A."/>
            <person name="Eng J.K."/>
            <person name="Allaire M."/>
            <person name="Veesler D."/>
            <person name="Wiggins P.A."/>
            <person name="Peterson S.B."/>
            <person name="Mougous J.D."/>
        </authorList>
    </citation>
    <scope>X-RAY CRYSTALLOGRAPHY (1.80 ANGSTROMS) OF 273-442 IN COMPLEX WITH TRI1</scope>
    <scope>FUNCTION</scope>
    <scope>SUBSTRATE SPECIFICITY</scope>
    <scope>SUBUNIT</scope>
    <scope>SUBCELLULAR LOCATION</scope>
    <scope>DOMAIN</scope>
    <scope>DISRUPTION PHENOTYPE</scope>
    <scope>MUTAGENESIS OF GLU-415</scope>
    <source>
        <strain>568</strain>
    </source>
</reference>
<keyword id="KW-0002">3D-structure</keyword>
<keyword id="KW-0328">Glycosyltransferase</keyword>
<keyword id="KW-1035">Host cytoplasm</keyword>
<keyword id="KW-0548">Nucleotidyltransferase</keyword>
<keyword id="KW-0964">Secreted</keyword>
<keyword id="KW-0800">Toxin</keyword>
<keyword id="KW-0808">Transferase</keyword>
<keyword id="KW-0843">Virulence</keyword>
<gene>
    <name evidence="3" type="primary">tre1</name>
    <name type="ordered locus">Spro_3017</name>
</gene>
<sequence length="444" mass="45824">MSELSAARELDEIAHTASEGWMIAGLIGGAIVGAALIAVTGGTAAVAVAAVVAGASAGGGLGEVLGSMSWAPRHVTGVLADGSPNVYINGRPAIRAHISTGECSEDGPAKKVVAQGSAKVYINDFPAARINDLLACSAEIHTGSPNVIIGGEKEQTDDIEPEIPDWVNWTLLAAGAGAAAVLATPAIAILGTLGGLGGGFAGSLIGGAFFGEGSDGQKWSMLAGGFVGGFAGGKGGAKFDAWRNTKIVEPPPRVTTKVDPISPPRMTLAEAVGQEQAKVWTQTARANAEKNNAQLSTLLTDDQIGAIYGYTTNEGYTALNPALRGQTPLTPELEAFTGHVTDGLNKLPAYNGETYRGTTLPAHILEQNQIGGTVSDGGFMSTSAKTPFDGDVSISVRGNSGKQIDFLSKYKNEAEVLYPPNTRFEVINRIEQNGTTHLLYREIP</sequence>
<protein>
    <recommendedName>
        <fullName evidence="4">NAD(+)--protein-arginine ADP-ribosyltransferase Tre1</fullName>
        <ecNumber evidence="2">2.4.2.31</ecNumber>
    </recommendedName>
    <alternativeName>
        <fullName evidence="3">Effector protein Tre1</fullName>
        <shortName evidence="3">Tre1-Sp</shortName>
    </alternativeName>
    <alternativeName>
        <fullName evidence="3">Type VI secretion ADP-ribosyltransferase effector 1</fullName>
    </alternativeName>
</protein>
<dbReference type="EC" id="2.4.2.31" evidence="2"/>
<dbReference type="EMBL" id="CP000826">
    <property type="protein sequence ID" value="ABV42118.1"/>
    <property type="molecule type" value="Genomic_DNA"/>
</dbReference>
<dbReference type="PDB" id="6DRE">
    <property type="method" value="X-ray"/>
    <property type="resolution" value="1.80 A"/>
    <property type="chains" value="B=273-442"/>
</dbReference>
<dbReference type="PDB" id="6DRH">
    <property type="method" value="X-ray"/>
    <property type="resolution" value="2.30 A"/>
    <property type="chains" value="B/D/F/H=273-441"/>
</dbReference>
<dbReference type="PDBsum" id="6DRE"/>
<dbReference type="PDBsum" id="6DRH"/>
<dbReference type="SMR" id="A8GG78"/>
<dbReference type="STRING" id="399741.Spro_3017"/>
<dbReference type="KEGG" id="spe:Spro_3017"/>
<dbReference type="eggNOG" id="COG4104">
    <property type="taxonomic scope" value="Bacteria"/>
</dbReference>
<dbReference type="HOGENOM" id="CLU_616409_0_0_6"/>
<dbReference type="OrthoDB" id="7030285at2"/>
<dbReference type="GO" id="GO:0005576">
    <property type="term" value="C:extracellular region"/>
    <property type="evidence" value="ECO:0007669"/>
    <property type="project" value="UniProtKB-SubCell"/>
</dbReference>
<dbReference type="GO" id="GO:0030430">
    <property type="term" value="C:host cell cytoplasm"/>
    <property type="evidence" value="ECO:0007669"/>
    <property type="project" value="UniProtKB-SubCell"/>
</dbReference>
<dbReference type="GO" id="GO:0003950">
    <property type="term" value="F:NAD+ poly-ADP-ribosyltransferase activity"/>
    <property type="evidence" value="ECO:0007669"/>
    <property type="project" value="TreeGrafter"/>
</dbReference>
<dbReference type="GO" id="GO:0106274">
    <property type="term" value="F:NAD+-protein-arginine ADP-ribosyltransferase activity"/>
    <property type="evidence" value="ECO:0007669"/>
    <property type="project" value="UniProtKB-EC"/>
</dbReference>
<dbReference type="GO" id="GO:0016779">
    <property type="term" value="F:nucleotidyltransferase activity"/>
    <property type="evidence" value="ECO:0007669"/>
    <property type="project" value="UniProtKB-KW"/>
</dbReference>
<dbReference type="GO" id="GO:0090729">
    <property type="term" value="F:toxin activity"/>
    <property type="evidence" value="ECO:0007669"/>
    <property type="project" value="UniProtKB-KW"/>
</dbReference>
<dbReference type="CDD" id="cd14742">
    <property type="entry name" value="PAAR_RHS"/>
    <property type="match status" value="1"/>
</dbReference>
<dbReference type="Gene3D" id="2.60.200.60">
    <property type="match status" value="1"/>
</dbReference>
<dbReference type="Gene3D" id="3.90.176.10">
    <property type="entry name" value="Toxin ADP-ribosyltransferase, Chain A, domain 1"/>
    <property type="match status" value="1"/>
</dbReference>
<dbReference type="InterPro" id="IPR050999">
    <property type="entry name" value="ADP-ribosyltransferase_ARG"/>
</dbReference>
<dbReference type="InterPro" id="IPR000768">
    <property type="entry name" value="ART"/>
</dbReference>
<dbReference type="InterPro" id="IPR008727">
    <property type="entry name" value="PAAR_motif"/>
</dbReference>
<dbReference type="PANTHER" id="PTHR10339">
    <property type="entry name" value="ADP-RIBOSYLTRANSFERASE"/>
    <property type="match status" value="1"/>
</dbReference>
<dbReference type="PANTHER" id="PTHR10339:SF25">
    <property type="entry name" value="SECRETED EXOENZYME S"/>
    <property type="match status" value="1"/>
</dbReference>
<dbReference type="Pfam" id="PF01129">
    <property type="entry name" value="ART"/>
    <property type="match status" value="1"/>
</dbReference>
<dbReference type="Pfam" id="PF05488">
    <property type="entry name" value="PAAR_motif"/>
    <property type="match status" value="1"/>
</dbReference>
<dbReference type="SUPFAM" id="SSF56399">
    <property type="entry name" value="ADP-ribosylation"/>
    <property type="match status" value="1"/>
</dbReference>
<dbReference type="PROSITE" id="PS51996">
    <property type="entry name" value="TR_MART"/>
    <property type="match status" value="1"/>
</dbReference>
<comment type="function">
    <text evidence="2">Toxic component of a contact-dependent interbacterial competition system (also called effector-immunity systems). Acts by ADP-ribosylating a number of target proteins in target cells; E.coli target proteins include FtsZ, EFTu, RNase E, Fis, RL9, SucB, and LolD. FtsZ is thought to be the physiologically relevant target as it is ADP-ribosylated on a critical residue. ADP-ribosylation of FtsZ prevents formation of the FtsZ mid-cell ring and inhibits cell division. Overexpression of the whole Tre1 protein or the ART domain in E.coli is toxic; cells elongate dramatically and some undergo lysis. Toxic activity is neutralized by coexpression of the cognate immunity protein Tri1-Sp; Tri1-Sp neutralizes this protein both by binding to and occluding the active site (via Tri1's N-terminal extension) and by hydrolysis of the ADP-ribosyl moiety from the target protein. Tre1 can also be neutralized by non-cognate immunity protein Tri1-Pp from P.putida strain GB-1, with which it does not form a stable complex; DraG of R.palustris does not neutralize the toxic effects of this protein. In interbacterial competition studies Tri1 from P.putida strain B6-2 also neutralizes this protein.</text>
</comment>
<comment type="catalytic activity">
    <reaction evidence="2">
        <text>L-arginyl-[protein] + NAD(+) = N(omega)-(ADP-D-ribosyl)-L-arginyl-[protein] + nicotinamide + H(+)</text>
        <dbReference type="Rhea" id="RHEA:19149"/>
        <dbReference type="Rhea" id="RHEA-COMP:10532"/>
        <dbReference type="Rhea" id="RHEA-COMP:15087"/>
        <dbReference type="ChEBI" id="CHEBI:15378"/>
        <dbReference type="ChEBI" id="CHEBI:17154"/>
        <dbReference type="ChEBI" id="CHEBI:29965"/>
        <dbReference type="ChEBI" id="CHEBI:57540"/>
        <dbReference type="ChEBI" id="CHEBI:142554"/>
        <dbReference type="EC" id="2.4.2.31"/>
    </reaction>
</comment>
<comment type="subunit">
    <text evidence="2">Forms a stable complex with cognate immunity protein Tri1-Sp.</text>
</comment>
<comment type="subcellular location">
    <subcellularLocation>
        <location evidence="4">Secreted</location>
    </subcellularLocation>
    <subcellularLocation>
        <location evidence="4">Host cytoplasm</location>
    </subcellularLocation>
    <text evidence="5">Probably delivered to target cells by a type 6 secretion system (T6SS).</text>
</comment>
<comment type="domain">
    <text evidence="2">The ART domain is toxic when expressed as a protein fragment.</text>
</comment>
<comment type="disruption phenotype">
    <text evidence="2">A double tre1-tri1 deletion is outcompeted by wild-type cells, but not by wild-type cells missing a type 6 secretion system (T6SS).</text>
</comment>
<comment type="similarity">
    <text evidence="4">Belongs to the Arg-specific ADP-ribosyltransferase family.</text>
</comment>
<organism>
    <name type="scientific">Serratia proteamaculans (strain 568)</name>
    <dbReference type="NCBI Taxonomy" id="399741"/>
    <lineage>
        <taxon>Bacteria</taxon>
        <taxon>Pseudomonadati</taxon>
        <taxon>Pseudomonadota</taxon>
        <taxon>Gammaproteobacteria</taxon>
        <taxon>Enterobacterales</taxon>
        <taxon>Yersiniaceae</taxon>
        <taxon>Serratia</taxon>
    </lineage>
</organism>